<proteinExistence type="evidence at protein level"/>
<protein>
    <recommendedName>
        <fullName>Gamma-glutamyl-hercynylcysteine sulfoxide hydrolase</fullName>
        <ecNumber evidence="1">3.5.1.118</ecNumber>
    </recommendedName>
    <alternativeName>
        <fullName>Gamma-glutamyl hercynylcysteine S-oxide hydrolase</fullName>
    </alternativeName>
</protein>
<evidence type="ECO:0000250" key="1">
    <source>
        <dbReference type="UniProtKB" id="A0R5M9"/>
    </source>
</evidence>
<evidence type="ECO:0000250" key="2">
    <source>
        <dbReference type="UniProtKB" id="Q8VIV2"/>
    </source>
</evidence>
<evidence type="ECO:0000255" key="3">
    <source>
        <dbReference type="PROSITE-ProRule" id="PRU00609"/>
    </source>
</evidence>
<feature type="chain" id="PRO_0000413650" description="Gamma-glutamyl-hercynylcysteine sulfoxide hydrolase">
    <location>
        <begin position="1"/>
        <end position="233"/>
    </location>
</feature>
<feature type="domain" description="Glutamine amidotransferase type-2" evidence="3">
    <location>
        <begin position="2"/>
        <end position="233"/>
    </location>
</feature>
<feature type="active site" description="Nucleophile" evidence="3">
    <location>
        <position position="2"/>
    </location>
</feature>
<sequence length="233" mass="24627">MCRHLGWLGAQVAVSSLVLDPPQGLRVQSYAPRRQKHGLMNADGWGVGFFDGAIPRRWRSPAPLWGDTSFHSVAPALRSHCILAAVRSATVGMPIEVSATPPFTDGHWLLAHNGVVDRAVLPAGPAAESVCDSAILAATIFAHGLDALGDTIVKVGAADPNARLNILAANGSRLIATTWGDTLSILRRADGVVLASEPYDDDSGWGDVPDRHLVEVTQKGVTLTALDRAKGPR</sequence>
<keyword id="KW-0315">Glutamine amidotransferase</keyword>
<keyword id="KW-0378">Hydrolase</keyword>
<keyword id="KW-1185">Reference proteome</keyword>
<comment type="function">
    <text evidence="1 2">Catalyzes the hydrolysis of the gamma-glutamyl amide bond of hercynyl-gamma-L-glutamyl-L-cysteine sulfoxide to produce hercynylcysteine sulfoxide, a step in the biosynthesis pathway of ergothioneine. Ergothioneine is an antioxidant that protects mycobacteria from oxidative stress.</text>
</comment>
<comment type="catalytic activity">
    <reaction evidence="1">
        <text>gamma-L-glutamyl-hercynylcysteine S-oxide + H2O = S-(hercyn-2-yl)-L-cysteine S-oxide + L-glutamate</text>
        <dbReference type="Rhea" id="RHEA:42684"/>
        <dbReference type="ChEBI" id="CHEBI:15377"/>
        <dbReference type="ChEBI" id="CHEBI:29985"/>
        <dbReference type="ChEBI" id="CHEBI:82703"/>
        <dbReference type="ChEBI" id="CHEBI:82706"/>
        <dbReference type="EC" id="3.5.1.118"/>
    </reaction>
</comment>
<comment type="pathway">
    <text evidence="1">Amino-acid biosynthesis; ergothioneine biosynthesis.</text>
</comment>
<accession>O69670</accession>
<accession>L0TF00</accession>
<dbReference type="EC" id="3.5.1.118" evidence="1"/>
<dbReference type="EMBL" id="AL123456">
    <property type="protein sequence ID" value="CCP46527.1"/>
    <property type="molecule type" value="Genomic_DNA"/>
</dbReference>
<dbReference type="PIR" id="G70793">
    <property type="entry name" value="G70793"/>
</dbReference>
<dbReference type="RefSeq" id="NP_218219.1">
    <property type="nucleotide sequence ID" value="NC_000962.3"/>
</dbReference>
<dbReference type="RefSeq" id="WP_003419806.1">
    <property type="nucleotide sequence ID" value="NZ_NVQJ01000028.1"/>
</dbReference>
<dbReference type="SMR" id="O69670"/>
<dbReference type="STRING" id="83332.Rv3702c"/>
<dbReference type="PaxDb" id="83332-Rv3702c"/>
<dbReference type="DNASU" id="885224"/>
<dbReference type="GeneID" id="885224"/>
<dbReference type="KEGG" id="mtu:Rv3702c"/>
<dbReference type="KEGG" id="mtv:RVBD_3702c"/>
<dbReference type="TubercuList" id="Rv3702c"/>
<dbReference type="eggNOG" id="COG0121">
    <property type="taxonomic scope" value="Bacteria"/>
</dbReference>
<dbReference type="InParanoid" id="O69670"/>
<dbReference type="OrthoDB" id="9804310at2"/>
<dbReference type="PhylomeDB" id="O69670"/>
<dbReference type="UniPathway" id="UPA01014"/>
<dbReference type="Proteomes" id="UP000001584">
    <property type="component" value="Chromosome"/>
</dbReference>
<dbReference type="GO" id="GO:0005886">
    <property type="term" value="C:plasma membrane"/>
    <property type="evidence" value="ECO:0007005"/>
    <property type="project" value="MTBBASE"/>
</dbReference>
<dbReference type="GO" id="GO:0016811">
    <property type="term" value="F:hydrolase activity, acting on carbon-nitrogen (but not peptide) bonds, in linear amides"/>
    <property type="evidence" value="ECO:0007669"/>
    <property type="project" value="UniProtKB-UniRule"/>
</dbReference>
<dbReference type="GO" id="GO:0052704">
    <property type="term" value="P:ergothioneine biosynthesis from histidine via gamma-glutamyl-hercynylcysteine sulfoxide"/>
    <property type="evidence" value="ECO:0000250"/>
    <property type="project" value="UniProtKB"/>
</dbReference>
<dbReference type="CDD" id="cd01908">
    <property type="entry name" value="YafJ"/>
    <property type="match status" value="1"/>
</dbReference>
<dbReference type="FunFam" id="3.60.20.10:FF:000080">
    <property type="entry name" value="Gamma-glutamyl-hercynylcysteine sulfoxide hydrolase"/>
    <property type="match status" value="1"/>
</dbReference>
<dbReference type="Gene3D" id="3.60.20.10">
    <property type="entry name" value="Glutamine Phosphoribosylpyrophosphate, subunit 1, domain 1"/>
    <property type="match status" value="1"/>
</dbReference>
<dbReference type="HAMAP" id="MF_02036">
    <property type="entry name" value="EgtC"/>
    <property type="match status" value="1"/>
</dbReference>
<dbReference type="InterPro" id="IPR017808">
    <property type="entry name" value="EgtC"/>
</dbReference>
<dbReference type="InterPro" id="IPR026869">
    <property type="entry name" value="EgtC-like"/>
</dbReference>
<dbReference type="InterPro" id="IPR032889">
    <property type="entry name" value="EgtC_Actinobacteria"/>
</dbReference>
<dbReference type="InterPro" id="IPR052373">
    <property type="entry name" value="Gamma-glu_amide_hydrolase"/>
</dbReference>
<dbReference type="InterPro" id="IPR017932">
    <property type="entry name" value="GATase_2_dom"/>
</dbReference>
<dbReference type="InterPro" id="IPR029055">
    <property type="entry name" value="Ntn_hydrolases_N"/>
</dbReference>
<dbReference type="NCBIfam" id="TIGR03442">
    <property type="entry name" value="ergothioneine biosynthesis protein EgtC"/>
    <property type="match status" value="1"/>
</dbReference>
<dbReference type="PANTHER" id="PTHR43187:SF2">
    <property type="entry name" value="GAMMA-GLUTAMYL-HERCYNYLCYSTEINE SULFOXIDE HYDROLASE"/>
    <property type="match status" value="1"/>
</dbReference>
<dbReference type="PANTHER" id="PTHR43187">
    <property type="entry name" value="GLUTAMINE AMIDOTRANSFERASE DUG3-RELATED"/>
    <property type="match status" value="1"/>
</dbReference>
<dbReference type="Pfam" id="PF13230">
    <property type="entry name" value="GATase_4"/>
    <property type="match status" value="1"/>
</dbReference>
<dbReference type="SUPFAM" id="SSF56235">
    <property type="entry name" value="N-terminal nucleophile aminohydrolases (Ntn hydrolases)"/>
    <property type="match status" value="1"/>
</dbReference>
<dbReference type="PROSITE" id="PS51278">
    <property type="entry name" value="GATASE_TYPE_2"/>
    <property type="match status" value="1"/>
</dbReference>
<name>EGTC_MYCTU</name>
<organism>
    <name type="scientific">Mycobacterium tuberculosis (strain ATCC 25618 / H37Rv)</name>
    <dbReference type="NCBI Taxonomy" id="83332"/>
    <lineage>
        <taxon>Bacteria</taxon>
        <taxon>Bacillati</taxon>
        <taxon>Actinomycetota</taxon>
        <taxon>Actinomycetes</taxon>
        <taxon>Mycobacteriales</taxon>
        <taxon>Mycobacteriaceae</taxon>
        <taxon>Mycobacterium</taxon>
        <taxon>Mycobacterium tuberculosis complex</taxon>
    </lineage>
</organism>
<reference key="1">
    <citation type="journal article" date="1998" name="Nature">
        <title>Deciphering the biology of Mycobacterium tuberculosis from the complete genome sequence.</title>
        <authorList>
            <person name="Cole S.T."/>
            <person name="Brosch R."/>
            <person name="Parkhill J."/>
            <person name="Garnier T."/>
            <person name="Churcher C.M."/>
            <person name="Harris D.E."/>
            <person name="Gordon S.V."/>
            <person name="Eiglmeier K."/>
            <person name="Gas S."/>
            <person name="Barry C.E. III"/>
            <person name="Tekaia F."/>
            <person name="Badcock K."/>
            <person name="Basham D."/>
            <person name="Brown D."/>
            <person name="Chillingworth T."/>
            <person name="Connor R."/>
            <person name="Davies R.M."/>
            <person name="Devlin K."/>
            <person name="Feltwell T."/>
            <person name="Gentles S."/>
            <person name="Hamlin N."/>
            <person name="Holroyd S."/>
            <person name="Hornsby T."/>
            <person name="Jagels K."/>
            <person name="Krogh A."/>
            <person name="McLean J."/>
            <person name="Moule S."/>
            <person name="Murphy L.D."/>
            <person name="Oliver S."/>
            <person name="Osborne J."/>
            <person name="Quail M.A."/>
            <person name="Rajandream M.A."/>
            <person name="Rogers J."/>
            <person name="Rutter S."/>
            <person name="Seeger K."/>
            <person name="Skelton S."/>
            <person name="Squares S."/>
            <person name="Squares R."/>
            <person name="Sulston J.E."/>
            <person name="Taylor K."/>
            <person name="Whitehead S."/>
            <person name="Barrell B.G."/>
        </authorList>
    </citation>
    <scope>NUCLEOTIDE SEQUENCE [LARGE SCALE GENOMIC DNA]</scope>
    <source>
        <strain>ATCC 25618 / H37Rv</strain>
    </source>
</reference>
<reference key="2">
    <citation type="journal article" date="2011" name="Mol. Cell. Proteomics">
        <title>Proteogenomic analysis of Mycobacterium tuberculosis by high resolution mass spectrometry.</title>
        <authorList>
            <person name="Kelkar D.S."/>
            <person name="Kumar D."/>
            <person name="Kumar P."/>
            <person name="Balakrishnan L."/>
            <person name="Muthusamy B."/>
            <person name="Yadav A.K."/>
            <person name="Shrivastava P."/>
            <person name="Marimuthu A."/>
            <person name="Anand S."/>
            <person name="Sundaram H."/>
            <person name="Kingsbury R."/>
            <person name="Harsha H.C."/>
            <person name="Nair B."/>
            <person name="Prasad T.S."/>
            <person name="Chauhan D.S."/>
            <person name="Katoch K."/>
            <person name="Katoch V.M."/>
            <person name="Kumar P."/>
            <person name="Chaerkady R."/>
            <person name="Ramachandran S."/>
            <person name="Dash D."/>
            <person name="Pandey A."/>
        </authorList>
    </citation>
    <scope>IDENTIFICATION BY MASS SPECTROMETRY [LARGE SCALE ANALYSIS]</scope>
    <source>
        <strain>ATCC 25618 / H37Rv</strain>
    </source>
</reference>
<gene>
    <name type="primary">egtC</name>
    <name type="ordered locus">Rv3702c</name>
</gene>